<reference key="1">
    <citation type="journal article" date="2005" name="J. Bacteriol.">
        <title>Whole-genome sequencing of Staphylococcus haemolyticus uncovers the extreme plasticity of its genome and the evolution of human-colonizing staphylococcal species.</title>
        <authorList>
            <person name="Takeuchi F."/>
            <person name="Watanabe S."/>
            <person name="Baba T."/>
            <person name="Yuzawa H."/>
            <person name="Ito T."/>
            <person name="Morimoto Y."/>
            <person name="Kuroda M."/>
            <person name="Cui L."/>
            <person name="Takahashi M."/>
            <person name="Ankai A."/>
            <person name="Baba S."/>
            <person name="Fukui S."/>
            <person name="Lee J.C."/>
            <person name="Hiramatsu K."/>
        </authorList>
    </citation>
    <scope>NUCLEOTIDE SEQUENCE [LARGE SCALE GENOMIC DNA]</scope>
    <source>
        <strain>JCSC1435</strain>
    </source>
</reference>
<comment type="function">
    <text evidence="1">Forms part of the ribosomal stalk, playing a central role in the interaction of the ribosome with GTP-bound translation factors.</text>
</comment>
<comment type="subunit">
    <text evidence="1">Part of the ribosomal stalk of the 50S ribosomal subunit. The N-terminus interacts with L11 and the large rRNA to form the base of the stalk. The C-terminus forms an elongated spine to which L12 dimers bind in a sequential fashion forming a multimeric L10(L12)X complex.</text>
</comment>
<comment type="similarity">
    <text evidence="1">Belongs to the universal ribosomal protein uL10 family.</text>
</comment>
<dbReference type="EMBL" id="AP006716">
    <property type="protein sequence ID" value="BAE05777.1"/>
    <property type="molecule type" value="Genomic_DNA"/>
</dbReference>
<dbReference type="RefSeq" id="WP_011276721.1">
    <property type="nucleotide sequence ID" value="NC_007168.1"/>
</dbReference>
<dbReference type="SMR" id="Q4L3K0"/>
<dbReference type="GeneID" id="93781682"/>
<dbReference type="KEGG" id="sha:SH2468"/>
<dbReference type="eggNOG" id="COG0244">
    <property type="taxonomic scope" value="Bacteria"/>
</dbReference>
<dbReference type="HOGENOM" id="CLU_092227_2_0_9"/>
<dbReference type="OrthoDB" id="9808307at2"/>
<dbReference type="Proteomes" id="UP000000543">
    <property type="component" value="Chromosome"/>
</dbReference>
<dbReference type="GO" id="GO:0015934">
    <property type="term" value="C:large ribosomal subunit"/>
    <property type="evidence" value="ECO:0007669"/>
    <property type="project" value="InterPro"/>
</dbReference>
<dbReference type="GO" id="GO:0070180">
    <property type="term" value="F:large ribosomal subunit rRNA binding"/>
    <property type="evidence" value="ECO:0007669"/>
    <property type="project" value="UniProtKB-UniRule"/>
</dbReference>
<dbReference type="GO" id="GO:0003735">
    <property type="term" value="F:structural constituent of ribosome"/>
    <property type="evidence" value="ECO:0007669"/>
    <property type="project" value="InterPro"/>
</dbReference>
<dbReference type="GO" id="GO:0006412">
    <property type="term" value="P:translation"/>
    <property type="evidence" value="ECO:0007669"/>
    <property type="project" value="UniProtKB-UniRule"/>
</dbReference>
<dbReference type="CDD" id="cd05797">
    <property type="entry name" value="Ribosomal_L10"/>
    <property type="match status" value="1"/>
</dbReference>
<dbReference type="FunFam" id="3.30.70.1730:FF:000001">
    <property type="entry name" value="50S ribosomal protein L10"/>
    <property type="match status" value="1"/>
</dbReference>
<dbReference type="Gene3D" id="3.30.70.1730">
    <property type="match status" value="1"/>
</dbReference>
<dbReference type="Gene3D" id="6.10.250.290">
    <property type="match status" value="1"/>
</dbReference>
<dbReference type="HAMAP" id="MF_00362">
    <property type="entry name" value="Ribosomal_uL10"/>
    <property type="match status" value="1"/>
</dbReference>
<dbReference type="InterPro" id="IPR001790">
    <property type="entry name" value="Ribosomal_uL10"/>
</dbReference>
<dbReference type="InterPro" id="IPR043141">
    <property type="entry name" value="Ribosomal_uL10-like_sf"/>
</dbReference>
<dbReference type="InterPro" id="IPR022973">
    <property type="entry name" value="Ribosomal_uL10_bac"/>
</dbReference>
<dbReference type="InterPro" id="IPR047865">
    <property type="entry name" value="Ribosomal_uL10_bac_type"/>
</dbReference>
<dbReference type="InterPro" id="IPR002363">
    <property type="entry name" value="Ribosomal_uL10_CS_bac"/>
</dbReference>
<dbReference type="NCBIfam" id="NF000955">
    <property type="entry name" value="PRK00099.1-1"/>
    <property type="match status" value="1"/>
</dbReference>
<dbReference type="PANTHER" id="PTHR11560">
    <property type="entry name" value="39S RIBOSOMAL PROTEIN L10, MITOCHONDRIAL"/>
    <property type="match status" value="1"/>
</dbReference>
<dbReference type="Pfam" id="PF00466">
    <property type="entry name" value="Ribosomal_L10"/>
    <property type="match status" value="1"/>
</dbReference>
<dbReference type="SUPFAM" id="SSF160369">
    <property type="entry name" value="Ribosomal protein L10-like"/>
    <property type="match status" value="1"/>
</dbReference>
<dbReference type="PROSITE" id="PS01109">
    <property type="entry name" value="RIBOSOMAL_L10"/>
    <property type="match status" value="1"/>
</dbReference>
<organism>
    <name type="scientific">Staphylococcus haemolyticus (strain JCSC1435)</name>
    <dbReference type="NCBI Taxonomy" id="279808"/>
    <lineage>
        <taxon>Bacteria</taxon>
        <taxon>Bacillati</taxon>
        <taxon>Bacillota</taxon>
        <taxon>Bacilli</taxon>
        <taxon>Bacillales</taxon>
        <taxon>Staphylococcaceae</taxon>
        <taxon>Staphylococcus</taxon>
    </lineage>
</organism>
<sequence length="166" mass="17763">MSAIIEAKKQQVDVIAEQLKNSVSTVIVDYRGLTVAEVTELRSQLREAGVEYKVYKNTMVRRAAEQAGIEGLDEFLTGPTAVATSTEDVVAPAKVIAGFAKEHEALEIKTGVMEGSVISAEEVKTVGSLPSHDGLVSMLLSVLQAPVRNFAYAVKAVGEQKEESAE</sequence>
<proteinExistence type="inferred from homology"/>
<feature type="chain" id="PRO_0000154713" description="Large ribosomal subunit protein uL10">
    <location>
        <begin position="1"/>
        <end position="166"/>
    </location>
</feature>
<evidence type="ECO:0000255" key="1">
    <source>
        <dbReference type="HAMAP-Rule" id="MF_00362"/>
    </source>
</evidence>
<evidence type="ECO:0000305" key="2"/>
<protein>
    <recommendedName>
        <fullName evidence="1">Large ribosomal subunit protein uL10</fullName>
    </recommendedName>
    <alternativeName>
        <fullName evidence="2">50S ribosomal protein L10</fullName>
    </alternativeName>
</protein>
<keyword id="KW-0687">Ribonucleoprotein</keyword>
<keyword id="KW-0689">Ribosomal protein</keyword>
<keyword id="KW-0694">RNA-binding</keyword>
<keyword id="KW-0699">rRNA-binding</keyword>
<name>RL10_STAHJ</name>
<accession>Q4L3K0</accession>
<gene>
    <name evidence="1" type="primary">rplJ</name>
    <name type="ordered locus">SH2468</name>
</gene>